<gene>
    <name evidence="1" type="primary">argS</name>
    <name type="ordered locus">CT0015</name>
</gene>
<protein>
    <recommendedName>
        <fullName evidence="1">Arginine--tRNA ligase</fullName>
        <ecNumber evidence="1">6.1.1.19</ecNumber>
    </recommendedName>
    <alternativeName>
        <fullName evidence="1">Arginyl-tRNA synthetase</fullName>
        <shortName evidence="1">ArgRS</shortName>
    </alternativeName>
</protein>
<sequence length="551" mass="61453">MRAFFLPFIQDALQKAGIETDKEIQIDKPNDKKFGDFSTNIAFLVAKEARKNPRELAGQLIGLLDFPEGTVTKTEVAGPGFINFHLAPAFFMRSAQEVLAKGEGFGCNESGKGLKAIVEYVSANPTGPLTIGRGRGGVLGDCIANLLETQGYEVTREYYFNDAGRQMQILAESVRYRYLEKCGQVIEFPETHYQGDYIGEIAETLFIEHGDGLAATDELTIFKEAAEAVIFSSIRKTLERLLITHDSFFNEHTLYQSREGQPSANQRVIDALDAKGFIGNYDGATWFMTTKLGQEKDKVLIKSSGDPSYRLPDIAYHVTKFERGFDLMVNVFGADHIDEYPDVLEALKILGYDTSKVKIAINQFVTTTVGGQTVKMSTRKGNADLLDDLIDDVGADATRLFFIMRGKDSHLNFDVELAKKQSKDNPVFYLQYAHARICSLVRMAEKEVGFDEATAIGAGLPLLSSEPEIDLASALLDFPDIIQSSLRQLEPQKMVEYLHTVAERYHKFYQECPILKADEHLRTARLELSLAVRQVLRNGFKILGISAPESM</sequence>
<keyword id="KW-0030">Aminoacyl-tRNA synthetase</keyword>
<keyword id="KW-0067">ATP-binding</keyword>
<keyword id="KW-0963">Cytoplasm</keyword>
<keyword id="KW-0436">Ligase</keyword>
<keyword id="KW-0547">Nucleotide-binding</keyword>
<keyword id="KW-0648">Protein biosynthesis</keyword>
<keyword id="KW-1185">Reference proteome</keyword>
<dbReference type="EC" id="6.1.1.19" evidence="1"/>
<dbReference type="EMBL" id="AE006470">
    <property type="protein sequence ID" value="AAM71263.1"/>
    <property type="molecule type" value="Genomic_DNA"/>
</dbReference>
<dbReference type="RefSeq" id="NP_660921.1">
    <property type="nucleotide sequence ID" value="NC_002932.3"/>
</dbReference>
<dbReference type="RefSeq" id="WP_010931709.1">
    <property type="nucleotide sequence ID" value="NC_002932.3"/>
</dbReference>
<dbReference type="SMR" id="Q8KGF3"/>
<dbReference type="STRING" id="194439.CT0015"/>
<dbReference type="EnsemblBacteria" id="AAM71263">
    <property type="protein sequence ID" value="AAM71263"/>
    <property type="gene ID" value="CT0015"/>
</dbReference>
<dbReference type="KEGG" id="cte:CT0015"/>
<dbReference type="PATRIC" id="fig|194439.7.peg.14"/>
<dbReference type="eggNOG" id="COG0018">
    <property type="taxonomic scope" value="Bacteria"/>
</dbReference>
<dbReference type="HOGENOM" id="CLU_006406_0_1_10"/>
<dbReference type="OrthoDB" id="9805987at2"/>
<dbReference type="Proteomes" id="UP000001007">
    <property type="component" value="Chromosome"/>
</dbReference>
<dbReference type="GO" id="GO:0005737">
    <property type="term" value="C:cytoplasm"/>
    <property type="evidence" value="ECO:0007669"/>
    <property type="project" value="UniProtKB-SubCell"/>
</dbReference>
<dbReference type="GO" id="GO:0004814">
    <property type="term" value="F:arginine-tRNA ligase activity"/>
    <property type="evidence" value="ECO:0007669"/>
    <property type="project" value="UniProtKB-UniRule"/>
</dbReference>
<dbReference type="GO" id="GO:0005524">
    <property type="term" value="F:ATP binding"/>
    <property type="evidence" value="ECO:0007669"/>
    <property type="project" value="UniProtKB-UniRule"/>
</dbReference>
<dbReference type="GO" id="GO:0006420">
    <property type="term" value="P:arginyl-tRNA aminoacylation"/>
    <property type="evidence" value="ECO:0007669"/>
    <property type="project" value="UniProtKB-UniRule"/>
</dbReference>
<dbReference type="CDD" id="cd00671">
    <property type="entry name" value="ArgRS_core"/>
    <property type="match status" value="1"/>
</dbReference>
<dbReference type="FunFam" id="1.10.730.10:FF:000008">
    <property type="entry name" value="Arginine--tRNA ligase"/>
    <property type="match status" value="1"/>
</dbReference>
<dbReference type="Gene3D" id="3.30.1360.70">
    <property type="entry name" value="Arginyl tRNA synthetase N-terminal domain"/>
    <property type="match status" value="1"/>
</dbReference>
<dbReference type="Gene3D" id="3.40.50.620">
    <property type="entry name" value="HUPs"/>
    <property type="match status" value="1"/>
</dbReference>
<dbReference type="Gene3D" id="1.10.730.10">
    <property type="entry name" value="Isoleucyl-tRNA Synthetase, Domain 1"/>
    <property type="match status" value="1"/>
</dbReference>
<dbReference type="HAMAP" id="MF_00123">
    <property type="entry name" value="Arg_tRNA_synth"/>
    <property type="match status" value="1"/>
</dbReference>
<dbReference type="InterPro" id="IPR001278">
    <property type="entry name" value="Arg-tRNA-ligase"/>
</dbReference>
<dbReference type="InterPro" id="IPR005148">
    <property type="entry name" value="Arg-tRNA-synth_N"/>
</dbReference>
<dbReference type="InterPro" id="IPR036695">
    <property type="entry name" value="Arg-tRNA-synth_N_sf"/>
</dbReference>
<dbReference type="InterPro" id="IPR035684">
    <property type="entry name" value="ArgRS_core"/>
</dbReference>
<dbReference type="InterPro" id="IPR008909">
    <property type="entry name" value="DALR_anticod-bd"/>
</dbReference>
<dbReference type="InterPro" id="IPR014729">
    <property type="entry name" value="Rossmann-like_a/b/a_fold"/>
</dbReference>
<dbReference type="InterPro" id="IPR009080">
    <property type="entry name" value="tRNAsynth_Ia_anticodon-bd"/>
</dbReference>
<dbReference type="NCBIfam" id="TIGR00456">
    <property type="entry name" value="argS"/>
    <property type="match status" value="1"/>
</dbReference>
<dbReference type="PANTHER" id="PTHR11956:SF5">
    <property type="entry name" value="ARGININE--TRNA LIGASE, CYTOPLASMIC"/>
    <property type="match status" value="1"/>
</dbReference>
<dbReference type="PANTHER" id="PTHR11956">
    <property type="entry name" value="ARGINYL-TRNA SYNTHETASE"/>
    <property type="match status" value="1"/>
</dbReference>
<dbReference type="Pfam" id="PF03485">
    <property type="entry name" value="Arg_tRNA_synt_N"/>
    <property type="match status" value="1"/>
</dbReference>
<dbReference type="Pfam" id="PF05746">
    <property type="entry name" value="DALR_1"/>
    <property type="match status" value="1"/>
</dbReference>
<dbReference type="Pfam" id="PF00750">
    <property type="entry name" value="tRNA-synt_1d"/>
    <property type="match status" value="1"/>
</dbReference>
<dbReference type="PRINTS" id="PR01038">
    <property type="entry name" value="TRNASYNTHARG"/>
</dbReference>
<dbReference type="SMART" id="SM01016">
    <property type="entry name" value="Arg_tRNA_synt_N"/>
    <property type="match status" value="1"/>
</dbReference>
<dbReference type="SMART" id="SM00836">
    <property type="entry name" value="DALR_1"/>
    <property type="match status" value="1"/>
</dbReference>
<dbReference type="SUPFAM" id="SSF47323">
    <property type="entry name" value="Anticodon-binding domain of a subclass of class I aminoacyl-tRNA synthetases"/>
    <property type="match status" value="1"/>
</dbReference>
<dbReference type="SUPFAM" id="SSF55190">
    <property type="entry name" value="Arginyl-tRNA synthetase (ArgRS), N-terminal 'additional' domain"/>
    <property type="match status" value="1"/>
</dbReference>
<dbReference type="SUPFAM" id="SSF52374">
    <property type="entry name" value="Nucleotidylyl transferase"/>
    <property type="match status" value="1"/>
</dbReference>
<feature type="chain" id="PRO_0000151547" description="Arginine--tRNA ligase">
    <location>
        <begin position="1"/>
        <end position="551"/>
    </location>
</feature>
<feature type="short sequence motif" description="'HIGH' region">
    <location>
        <begin position="123"/>
        <end position="133"/>
    </location>
</feature>
<organism>
    <name type="scientific">Chlorobaculum tepidum (strain ATCC 49652 / DSM 12025 / NBRC 103806 / TLS)</name>
    <name type="common">Chlorobium tepidum</name>
    <dbReference type="NCBI Taxonomy" id="194439"/>
    <lineage>
        <taxon>Bacteria</taxon>
        <taxon>Pseudomonadati</taxon>
        <taxon>Chlorobiota</taxon>
        <taxon>Chlorobiia</taxon>
        <taxon>Chlorobiales</taxon>
        <taxon>Chlorobiaceae</taxon>
        <taxon>Chlorobaculum</taxon>
    </lineage>
</organism>
<evidence type="ECO:0000255" key="1">
    <source>
        <dbReference type="HAMAP-Rule" id="MF_00123"/>
    </source>
</evidence>
<comment type="catalytic activity">
    <reaction evidence="1">
        <text>tRNA(Arg) + L-arginine + ATP = L-arginyl-tRNA(Arg) + AMP + diphosphate</text>
        <dbReference type="Rhea" id="RHEA:20301"/>
        <dbReference type="Rhea" id="RHEA-COMP:9658"/>
        <dbReference type="Rhea" id="RHEA-COMP:9673"/>
        <dbReference type="ChEBI" id="CHEBI:30616"/>
        <dbReference type="ChEBI" id="CHEBI:32682"/>
        <dbReference type="ChEBI" id="CHEBI:33019"/>
        <dbReference type="ChEBI" id="CHEBI:78442"/>
        <dbReference type="ChEBI" id="CHEBI:78513"/>
        <dbReference type="ChEBI" id="CHEBI:456215"/>
        <dbReference type="EC" id="6.1.1.19"/>
    </reaction>
</comment>
<comment type="subunit">
    <text evidence="1">Monomer.</text>
</comment>
<comment type="subcellular location">
    <subcellularLocation>
        <location evidence="1">Cytoplasm</location>
    </subcellularLocation>
</comment>
<comment type="similarity">
    <text evidence="1">Belongs to the class-I aminoacyl-tRNA synthetase family.</text>
</comment>
<proteinExistence type="inferred from homology"/>
<reference key="1">
    <citation type="journal article" date="2002" name="Proc. Natl. Acad. Sci. U.S.A.">
        <title>The complete genome sequence of Chlorobium tepidum TLS, a photosynthetic, anaerobic, green-sulfur bacterium.</title>
        <authorList>
            <person name="Eisen J.A."/>
            <person name="Nelson K.E."/>
            <person name="Paulsen I.T."/>
            <person name="Heidelberg J.F."/>
            <person name="Wu M."/>
            <person name="Dodson R.J."/>
            <person name="DeBoy R.T."/>
            <person name="Gwinn M.L."/>
            <person name="Nelson W.C."/>
            <person name="Haft D.H."/>
            <person name="Hickey E.K."/>
            <person name="Peterson J.D."/>
            <person name="Durkin A.S."/>
            <person name="Kolonay J.F."/>
            <person name="Yang F."/>
            <person name="Holt I.E."/>
            <person name="Umayam L.A."/>
            <person name="Mason T.M."/>
            <person name="Brenner M."/>
            <person name="Shea T.P."/>
            <person name="Parksey D.S."/>
            <person name="Nierman W.C."/>
            <person name="Feldblyum T.V."/>
            <person name="Hansen C.L."/>
            <person name="Craven M.B."/>
            <person name="Radune D."/>
            <person name="Vamathevan J.J."/>
            <person name="Khouri H.M."/>
            <person name="White O."/>
            <person name="Gruber T.M."/>
            <person name="Ketchum K.A."/>
            <person name="Venter J.C."/>
            <person name="Tettelin H."/>
            <person name="Bryant D.A."/>
            <person name="Fraser C.M."/>
        </authorList>
    </citation>
    <scope>NUCLEOTIDE SEQUENCE [LARGE SCALE GENOMIC DNA]</scope>
    <source>
        <strain>ATCC 49652 / DSM 12025 / NBRC 103806 / TLS</strain>
    </source>
</reference>
<accession>Q8KGF3</accession>
<name>SYR_CHLTE</name>